<proteinExistence type="evidence at transcript level"/>
<comment type="function">
    <text evidence="1 4 5">Alternate catalytic subunit of the 1,3-beta-glucan synthase (GS) complex (By similarity). Synthesizes 1,3-beta-glucan, a major structural component of the yeast cell wall (By similarity). Has a role in ascospore development where it is required for the assembly of a functional spore wall (PubMed:10922478, PubMed:11069657).</text>
</comment>
<comment type="catalytic activity">
    <reaction evidence="1">
        <text>[(1-&gt;3)-beta-D-glucosyl](n) + UDP-alpha-D-glucose = [(1-&gt;3)-beta-D-glucosyl](n+1) + UDP + H(+)</text>
        <dbReference type="Rhea" id="RHEA:21476"/>
        <dbReference type="Rhea" id="RHEA-COMP:11146"/>
        <dbReference type="Rhea" id="RHEA-COMP:14303"/>
        <dbReference type="ChEBI" id="CHEBI:15378"/>
        <dbReference type="ChEBI" id="CHEBI:37671"/>
        <dbReference type="ChEBI" id="CHEBI:58223"/>
        <dbReference type="ChEBI" id="CHEBI:58885"/>
        <dbReference type="EC" id="2.4.1.34"/>
    </reaction>
</comment>
<comment type="subunit">
    <text evidence="1">Component of the 1,3-beta-glucan synthase (GS) complex, composed of at least the alternate catalytic subunits bgs1, bgs2, bgs3, and bgs4, and a regulatory subunit chr4.</text>
</comment>
<comment type="subcellular location">
    <subcellularLocation>
        <location evidence="4 5">Prospore membrane</location>
        <topology evidence="4 5">Multi-pass membrane protein</topology>
    </subcellularLocation>
</comment>
<comment type="induction">
    <text evidence="5">By sporulation.</text>
</comment>
<comment type="similarity">
    <text evidence="8">Belongs to the glycosyltransferase 48 family.</text>
</comment>
<feature type="chain" id="PRO_0000121722" description="1,3-beta-glucan synthase component bgs2">
    <location>
        <begin position="1"/>
        <end position="1894"/>
    </location>
</feature>
<feature type="transmembrane region" description="Helical" evidence="2">
    <location>
        <begin position="530"/>
        <end position="550"/>
    </location>
</feature>
<feature type="transmembrane region" description="Helical" evidence="2">
    <location>
        <begin position="566"/>
        <end position="586"/>
    </location>
</feature>
<feature type="transmembrane region" description="Helical" evidence="2">
    <location>
        <begin position="600"/>
        <end position="620"/>
    </location>
</feature>
<feature type="transmembrane region" description="Helical" evidence="2">
    <location>
        <begin position="655"/>
        <end position="675"/>
    </location>
</feature>
<feature type="transmembrane region" description="Helical" evidence="2">
    <location>
        <begin position="710"/>
        <end position="730"/>
    </location>
</feature>
<feature type="transmembrane region" description="Helical" evidence="2">
    <location>
        <begin position="731"/>
        <end position="751"/>
    </location>
</feature>
<feature type="transmembrane region" description="Helical" evidence="2">
    <location>
        <begin position="1338"/>
        <end position="1358"/>
    </location>
</feature>
<feature type="transmembrane region" description="Helical" evidence="2">
    <location>
        <begin position="1394"/>
        <end position="1414"/>
    </location>
</feature>
<feature type="transmembrane region" description="Helical" evidence="2">
    <location>
        <begin position="1476"/>
        <end position="1498"/>
    </location>
</feature>
<feature type="transmembrane region" description="Helical" evidence="2">
    <location>
        <begin position="1503"/>
        <end position="1525"/>
    </location>
</feature>
<feature type="transmembrane region" description="Helical" evidence="2">
    <location>
        <begin position="1598"/>
        <end position="1618"/>
    </location>
</feature>
<feature type="transmembrane region" description="Helical" evidence="2">
    <location>
        <begin position="1637"/>
        <end position="1657"/>
    </location>
</feature>
<feature type="transmembrane region" description="Helical" evidence="2">
    <location>
        <begin position="1673"/>
        <end position="1693"/>
    </location>
</feature>
<feature type="transmembrane region" description="Helical" evidence="2">
    <location>
        <begin position="1697"/>
        <end position="1717"/>
    </location>
</feature>
<feature type="transmembrane region" description="Helical" evidence="2">
    <location>
        <begin position="1778"/>
        <end position="1798"/>
    </location>
</feature>
<feature type="transmembrane region" description="Helical" evidence="2">
    <location>
        <begin position="1837"/>
        <end position="1857"/>
    </location>
</feature>
<feature type="region of interest" description="Disordered" evidence="3">
    <location>
        <begin position="1"/>
        <end position="53"/>
    </location>
</feature>
<feature type="region of interest" description="Disordered" evidence="3">
    <location>
        <begin position="282"/>
        <end position="310"/>
    </location>
</feature>
<feature type="compositionally biased region" description="Polar residues" evidence="3">
    <location>
        <begin position="32"/>
        <end position="51"/>
    </location>
</feature>
<feature type="compositionally biased region" description="Basic residues" evidence="3">
    <location>
        <begin position="286"/>
        <end position="296"/>
    </location>
</feature>
<protein>
    <recommendedName>
        <fullName evidence="6">1,3-beta-glucan synthase component bgs2</fullName>
        <ecNumber evidence="1">2.4.1.34</ecNumber>
    </recommendedName>
    <alternativeName>
        <fullName>1,3-beta-D-glucan-UDP glucosyltransferase</fullName>
    </alternativeName>
    <alternativeName>
        <fullName>Meiotic expression up-regulated protein 21</fullName>
    </alternativeName>
</protein>
<dbReference type="EC" id="2.4.1.34" evidence="1"/>
<dbReference type="EMBL" id="CU329670">
    <property type="protein sequence ID" value="CAB11264.2"/>
    <property type="molecule type" value="Genomic_DNA"/>
</dbReference>
<dbReference type="EMBL" id="AB054305">
    <property type="protein sequence ID" value="BAB60872.1"/>
    <property type="molecule type" value="mRNA"/>
</dbReference>
<dbReference type="PIR" id="T38348">
    <property type="entry name" value="T38348"/>
</dbReference>
<dbReference type="RefSeq" id="NP_594032.1">
    <property type="nucleotide sequence ID" value="NM_001019457.2"/>
</dbReference>
<dbReference type="SMR" id="O13967"/>
<dbReference type="BioGRID" id="278083">
    <property type="interactions" value="2"/>
</dbReference>
<dbReference type="FunCoup" id="O13967">
    <property type="interactions" value="187"/>
</dbReference>
<dbReference type="STRING" id="284812.O13967"/>
<dbReference type="CAZy" id="GT48">
    <property type="family name" value="Glycosyltransferase Family 48"/>
</dbReference>
<dbReference type="PaxDb" id="4896-SPAC24C9.07c.1"/>
<dbReference type="EnsemblFungi" id="SPAC24C9.07c.1">
    <property type="protein sequence ID" value="SPAC24C9.07c.1:pep"/>
    <property type="gene ID" value="SPAC24C9.07c"/>
</dbReference>
<dbReference type="GeneID" id="2541586"/>
<dbReference type="KEGG" id="spo:2541586"/>
<dbReference type="PomBase" id="SPAC24C9.07c">
    <property type="gene designation" value="bgs2"/>
</dbReference>
<dbReference type="VEuPathDB" id="FungiDB:SPAC24C9.07c"/>
<dbReference type="eggNOG" id="KOG0916">
    <property type="taxonomic scope" value="Eukaryota"/>
</dbReference>
<dbReference type="HOGENOM" id="CLU_000844_0_1_1"/>
<dbReference type="InParanoid" id="O13967"/>
<dbReference type="OMA" id="TVSMQRY"/>
<dbReference type="PhylomeDB" id="O13967"/>
<dbReference type="PRO" id="PR:O13967"/>
<dbReference type="Proteomes" id="UP000002485">
    <property type="component" value="Chromosome I"/>
</dbReference>
<dbReference type="GO" id="GO:0000148">
    <property type="term" value="C:1,3-beta-D-glucan synthase complex"/>
    <property type="evidence" value="ECO:0000305"/>
    <property type="project" value="PomBase"/>
</dbReference>
<dbReference type="GO" id="GO:0005886">
    <property type="term" value="C:plasma membrane"/>
    <property type="evidence" value="ECO:0000318"/>
    <property type="project" value="GO_Central"/>
</dbReference>
<dbReference type="GO" id="GO:0005628">
    <property type="term" value="C:prospore membrane"/>
    <property type="evidence" value="ECO:0000314"/>
    <property type="project" value="PomBase"/>
</dbReference>
<dbReference type="GO" id="GO:0003843">
    <property type="term" value="F:1,3-beta-D-glucan synthase activity"/>
    <property type="evidence" value="ECO:0000315"/>
    <property type="project" value="PomBase"/>
</dbReference>
<dbReference type="GO" id="GO:0006075">
    <property type="term" value="P:(1-&gt;3)-beta-D-glucan biosynthetic process"/>
    <property type="evidence" value="ECO:0000318"/>
    <property type="project" value="GO_Central"/>
</dbReference>
<dbReference type="GO" id="GO:0034413">
    <property type="term" value="P:ascospore wall (1-&gt;3)-beta-D-glucan biosynthetic process"/>
    <property type="evidence" value="ECO:0000315"/>
    <property type="project" value="PomBase"/>
</dbReference>
<dbReference type="GO" id="GO:0051278">
    <property type="term" value="P:fungal-type cell wall polysaccharide biosynthetic process"/>
    <property type="evidence" value="ECO:0000318"/>
    <property type="project" value="GO_Central"/>
</dbReference>
<dbReference type="InterPro" id="IPR026899">
    <property type="entry name" value="FKS1-like_dom1"/>
</dbReference>
<dbReference type="InterPro" id="IPR056261">
    <property type="entry name" value="FKS1-like_dom2"/>
</dbReference>
<dbReference type="InterPro" id="IPR003440">
    <property type="entry name" value="Glyco_trans_48_dom"/>
</dbReference>
<dbReference type="PANTHER" id="PTHR12741:SF48">
    <property type="entry name" value="1,3-BETA-GLUCAN SYNTHASE COMPONENT FKS1-RELATED"/>
    <property type="match status" value="1"/>
</dbReference>
<dbReference type="PANTHER" id="PTHR12741">
    <property type="entry name" value="LYST-INTERACTING PROTEIN LIP5 DOPAMINE RESPONSIVE PROTEIN DRG-1"/>
    <property type="match status" value="1"/>
</dbReference>
<dbReference type="Pfam" id="PF14288">
    <property type="entry name" value="FKS1_dom1"/>
    <property type="match status" value="1"/>
</dbReference>
<dbReference type="Pfam" id="PF23605">
    <property type="entry name" value="FKS1_dom2"/>
    <property type="match status" value="1"/>
</dbReference>
<dbReference type="Pfam" id="PF02364">
    <property type="entry name" value="Glucan_synthase"/>
    <property type="match status" value="1"/>
</dbReference>
<dbReference type="SMART" id="SM01205">
    <property type="entry name" value="FKS1_dom1"/>
    <property type="match status" value="1"/>
</dbReference>
<reference key="1">
    <citation type="journal article" date="2002" name="Nature">
        <title>The genome sequence of Schizosaccharomyces pombe.</title>
        <authorList>
            <person name="Wood V."/>
            <person name="Gwilliam R."/>
            <person name="Rajandream M.A."/>
            <person name="Lyne M.H."/>
            <person name="Lyne R."/>
            <person name="Stewart A."/>
            <person name="Sgouros J.G."/>
            <person name="Peat N."/>
            <person name="Hayles J."/>
            <person name="Baker S.G."/>
            <person name="Basham D."/>
            <person name="Bowman S."/>
            <person name="Brooks K."/>
            <person name="Brown D."/>
            <person name="Brown S."/>
            <person name="Chillingworth T."/>
            <person name="Churcher C.M."/>
            <person name="Collins M."/>
            <person name="Connor R."/>
            <person name="Cronin A."/>
            <person name="Davis P."/>
            <person name="Feltwell T."/>
            <person name="Fraser A."/>
            <person name="Gentles S."/>
            <person name="Goble A."/>
            <person name="Hamlin N."/>
            <person name="Harris D.E."/>
            <person name="Hidalgo J."/>
            <person name="Hodgson G."/>
            <person name="Holroyd S."/>
            <person name="Hornsby T."/>
            <person name="Howarth S."/>
            <person name="Huckle E.J."/>
            <person name="Hunt S."/>
            <person name="Jagels K."/>
            <person name="James K.D."/>
            <person name="Jones L."/>
            <person name="Jones M."/>
            <person name="Leather S."/>
            <person name="McDonald S."/>
            <person name="McLean J."/>
            <person name="Mooney P."/>
            <person name="Moule S."/>
            <person name="Mungall K.L."/>
            <person name="Murphy L.D."/>
            <person name="Niblett D."/>
            <person name="Odell C."/>
            <person name="Oliver K."/>
            <person name="O'Neil S."/>
            <person name="Pearson D."/>
            <person name="Quail M.A."/>
            <person name="Rabbinowitsch E."/>
            <person name="Rutherford K.M."/>
            <person name="Rutter S."/>
            <person name="Saunders D."/>
            <person name="Seeger K."/>
            <person name="Sharp S."/>
            <person name="Skelton J."/>
            <person name="Simmonds M.N."/>
            <person name="Squares R."/>
            <person name="Squares S."/>
            <person name="Stevens K."/>
            <person name="Taylor K."/>
            <person name="Taylor R.G."/>
            <person name="Tivey A."/>
            <person name="Walsh S.V."/>
            <person name="Warren T."/>
            <person name="Whitehead S."/>
            <person name="Woodward J.R."/>
            <person name="Volckaert G."/>
            <person name="Aert R."/>
            <person name="Robben J."/>
            <person name="Grymonprez B."/>
            <person name="Weltjens I."/>
            <person name="Vanstreels E."/>
            <person name="Rieger M."/>
            <person name="Schaefer M."/>
            <person name="Mueller-Auer S."/>
            <person name="Gabel C."/>
            <person name="Fuchs M."/>
            <person name="Duesterhoeft A."/>
            <person name="Fritzc C."/>
            <person name="Holzer E."/>
            <person name="Moestl D."/>
            <person name="Hilbert H."/>
            <person name="Borzym K."/>
            <person name="Langer I."/>
            <person name="Beck A."/>
            <person name="Lehrach H."/>
            <person name="Reinhardt R."/>
            <person name="Pohl T.M."/>
            <person name="Eger P."/>
            <person name="Zimmermann W."/>
            <person name="Wedler H."/>
            <person name="Wambutt R."/>
            <person name="Purnelle B."/>
            <person name="Goffeau A."/>
            <person name="Cadieu E."/>
            <person name="Dreano S."/>
            <person name="Gloux S."/>
            <person name="Lelaure V."/>
            <person name="Mottier S."/>
            <person name="Galibert F."/>
            <person name="Aves S.J."/>
            <person name="Xiang Z."/>
            <person name="Hunt C."/>
            <person name="Moore K."/>
            <person name="Hurst S.M."/>
            <person name="Lucas M."/>
            <person name="Rochet M."/>
            <person name="Gaillardin C."/>
            <person name="Tallada V.A."/>
            <person name="Garzon A."/>
            <person name="Thode G."/>
            <person name="Daga R.R."/>
            <person name="Cruzado L."/>
            <person name="Jimenez J."/>
            <person name="Sanchez M."/>
            <person name="del Rey F."/>
            <person name="Benito J."/>
            <person name="Dominguez A."/>
            <person name="Revuelta J.L."/>
            <person name="Moreno S."/>
            <person name="Armstrong J."/>
            <person name="Forsburg S.L."/>
            <person name="Cerutti L."/>
            <person name="Lowe T."/>
            <person name="McCombie W.R."/>
            <person name="Paulsen I."/>
            <person name="Potashkin J."/>
            <person name="Shpakovski G.V."/>
            <person name="Ussery D."/>
            <person name="Barrell B.G."/>
            <person name="Nurse P."/>
        </authorList>
    </citation>
    <scope>NUCLEOTIDE SEQUENCE [LARGE SCALE GENOMIC DNA]</scope>
    <source>
        <strain>972 / ATCC 24843</strain>
    </source>
</reference>
<reference key="2">
    <citation type="journal article" date="2001" name="Nucleic Acids Res.">
        <title>Comprehensive isolation of meiosis-specific genes identifies novel proteins and unusual non-coding transcripts in Schizosaccharomyces pombe.</title>
        <authorList>
            <person name="Watanabe T."/>
            <person name="Miyashita K."/>
            <person name="Saito T.T."/>
            <person name="Yoneki T."/>
            <person name="Kakihara Y."/>
            <person name="Nabeshima K."/>
            <person name="Kishi Y.A."/>
            <person name="Shimoda C."/>
            <person name="Nojima H."/>
        </authorList>
    </citation>
    <scope>NUCLEOTIDE SEQUENCE [MRNA] OF 1717-1894</scope>
    <source>
        <strain>CD16-1</strain>
    </source>
</reference>
<reference key="3">
    <citation type="journal article" date="2000" name="Mol. Microbiol.">
        <title>bgs2+, a sporulation-specific glucan synthase homologue is required for proper ascospore wall maturation in fission yeast.</title>
        <authorList>
            <person name="Martin V."/>
            <person name="Ribas J.C."/>
            <person name="Carnero E."/>
            <person name="Duran A."/>
            <person name="Sanchez Y."/>
        </authorList>
    </citation>
    <scope>FUNCTION</scope>
    <scope>SUBCELLULAR LOCATION</scope>
    <scope>INDUCTION</scope>
</reference>
<reference key="4">
    <citation type="journal article" date="2000" name="FEBS Lett.">
        <title>Bgs2p, a 1,3-beta-glucan synthase subunit, is essential for maturation of ascospore wall in Schizosaccharomyces pombe.</title>
        <authorList>
            <person name="Liu J."/>
            <person name="Tang X."/>
            <person name="Wang H."/>
            <person name="Balasubramanian M."/>
        </authorList>
    </citation>
    <scope>FUNCTION</scope>
    <scope>SUBCELLULAR LOCATION</scope>
</reference>
<name>FKS2_SCHPO</name>
<gene>
    <name evidence="7" type="primary">bgs2</name>
    <name type="synonym">meu21</name>
    <name evidence="9" type="ORF">SPAC24C9.07c</name>
</gene>
<evidence type="ECO:0000250" key="1">
    <source>
        <dbReference type="UniProtKB" id="P38631"/>
    </source>
</evidence>
<evidence type="ECO:0000255" key="2"/>
<evidence type="ECO:0000256" key="3">
    <source>
        <dbReference type="SAM" id="MobiDB-lite"/>
    </source>
</evidence>
<evidence type="ECO:0000269" key="4">
    <source>
    </source>
</evidence>
<evidence type="ECO:0000269" key="5">
    <source>
    </source>
</evidence>
<evidence type="ECO:0000303" key="6">
    <source>
    </source>
</evidence>
<evidence type="ECO:0000303" key="7">
    <source>
    </source>
</evidence>
<evidence type="ECO:0000305" key="8"/>
<evidence type="ECO:0000312" key="9">
    <source>
        <dbReference type="PomBase" id="SPAC24C9.07c"/>
    </source>
</evidence>
<keyword id="KW-0328">Glycosyltransferase</keyword>
<keyword id="KW-0469">Meiosis</keyword>
<keyword id="KW-0472">Membrane</keyword>
<keyword id="KW-1185">Reference proteome</keyword>
<keyword id="KW-0749">Sporulation</keyword>
<keyword id="KW-0808">Transferase</keyword>
<keyword id="KW-0812">Transmembrane</keyword>
<keyword id="KW-1133">Transmembrane helix</keyword>
<organism>
    <name type="scientific">Schizosaccharomyces pombe (strain 972 / ATCC 24843)</name>
    <name type="common">Fission yeast</name>
    <dbReference type="NCBI Taxonomy" id="284812"/>
    <lineage>
        <taxon>Eukaryota</taxon>
        <taxon>Fungi</taxon>
        <taxon>Dikarya</taxon>
        <taxon>Ascomycota</taxon>
        <taxon>Taphrinomycotina</taxon>
        <taxon>Schizosaccharomycetes</taxon>
        <taxon>Schizosaccharomycetales</taxon>
        <taxon>Schizosaccharomycetaceae</taxon>
        <taxon>Schizosaccharomyces</taxon>
    </lineage>
</organism>
<sequence length="1894" mass="219183">MSWHEQDYGFGTSSENSKINSDEFEDSMDVTEFNNPGEESTYPQANSWNDSNKTKDIAEYYDYSWSGQREANQQIPQPVPVQPRYPDEQNFSMNGETYPSEAYDYDYSGQEEAINAMNILQGNLERSNEYYSEGVPYSEEDLGAYAGGMTEDDQMYSNFNETGEFNLDIGSSKFSYLNAKNPYPAWIAENSIPITAENILEIFQELQAKFGFQYDSMLNMYDFFMVLLDSRSSRMDAENALKSLHADYIGGRNANYRKWYFSSSMDIDDSVGLQNCKFSSNGPKIKQAKKKQKRKSNKAETEGTNEPETSVQIDPLNVSMENWENEMKNLDCETQVRQLALYLLCWGEANNIRFCPECLCFIFKLANDFMQSEDYAKSEPIEDDCFYLDNVITPLYEFIRDQQFELLDGKLVRRERDHAQIIGYDDINQLFWYPEGIARIVTVDGTQLITLPKWERFHKLSEVDWKKAFYKTFYESRSWFHLVTNFNRIWVIHFTTYWYYTVFNSPTIIEKNFRQSVGPKPIPSCHWTSVSLGGAVATLLMLLATIFEWIHVPRKFPGSRPLLKRFLILILFFILNVAPTVFVFGFSTEEQQRTTGRLTVAIVHFIFSVFTFIYFSLVPLNNLFHRAYKSSSRTHLANRYFTADYARLQINDMCVSWGLWLLVFGAKFTESYFFLSLSFRDPILVLSTMKPYLCNITFLGSHLCIWQPKILLGIMYVTDLVLFFLDTYLWYILVNTVFSVARSFFLGISIWTPWRNIFARMPKRIYSKILCTPEVDSSYKPKVLVSQIWNSIIISLYREHLLAIEHVQRLIYHQVNSLDGDGSKTLKTPTFFVSQEDSSFNTEYFPAHSEAERRLSFFAQSLATPIPEPIPVDAMPTFTVLVPHYGEKILLSLKEIIREQDKLSRVTLLEYLKQLHANEWKCFVRDTKILAEEDALSNQDLNSQDESMKAEQLHKKFDDLPFYCIGFKNATPEYTLRTRIWASLRSQTLYRTVSGFMNYSRAIKLLYRVENPDVAQLFEGQMDVLEYELDRMASRKFKMCVSMQRYAKFTADEIENTEFILRAYPDLLIAYLDEDPPKEGETTPQLYAALIDGYSELDENKKRKPKYRIKLSGNPILGDGKSDNQNLSLPFYRGEYIQLIDANQDNYLEECLKIRSILAEFEAFDLKTNDPYAETNALYQNNPVAIMGAREYIFSENIGILGDVAAGKEQTFGTLFARTMAQIGGKLHYGHPDFLNAIYMTTRGGVSKAQKGLHVNEDIYAGMTALQRGGRIKHCEYYQCGKGRDLGFGSILNFTTKIGTGMGEQMVSREYYYLGTQLPFDRFLSFYYAHPGFHINNIFIMLSVQLFMVVLVNLGGMYHVVTVCDYDHDQKLTVPMRPEGCYQLNPVVNWLKRCIISIFIVFFISFVPLTVQELTERGAWRALTRLGKHFASFSPMFEVFACQTYAQSVIANLSFGGARYIGTGRGFATARLSFSLLFSRFAGPSIYLGSRTLLMLLFGTMTVWIPHLIYFWISTLAMCISPFIFNPHQFSWTDFFVDYREFIRWLSRGNSRSHINSWIGYCRLTRTRITGYKRRLLGVPVSKGVIDTSRAHFTNMFFTEIFIPLMLVPLTLVSYFFIDSQPGNPDPSKVTNPILRILILAFLPIIVAAVVSMTFAGMACMMGPLLDLCCKKFGAVLAALAHGITVFMFIIVFEVSWYLEAWCLAKTVLSMLCIIAIQRFFFKIIQVLFLTRELKHDGTNLAWWTGKWYSRGLGFHALSQPSRELICKMTELNFFAADFFLCHLLLFLMLPVLLIPFIDRWHSMMLFWLKPSKQIRPPIYSMRQNRLRKKIVQRYGTMFFLLLIAFLALIIIPLVVAKDLLANFEMDILRTYGLMQPRDTNWTENGTNWTTVNE</sequence>
<accession>O13967</accession>
<accession>Q96WS3</accession>